<sequence>MATINDNYLKLKAGYLFPEIARRVNAFAQSNPEAAIIRLGIGDVTEPLPVACRQAMIQAVEDMGQRENFKGYGPEQGYAWLREKIAAHDFQSRGCEVDASEIFISDGSKCDCGNILDIFGNNNRIAVTDPVYPVYVDTNVMAGHTGDANDRGEYDGLVYLPISAENNFTAEIPSEKVDLIYLCFPNNPTGAVASREYLQAWVDYARANGAIILFDAAYEAFITDPAIPHSIFEIPGARDCAIEFRSFSKNAGFTGTRCAFTVVPKGLKGKAADGSEVELWGLWNRRQSTKFNGVSYIVQRGAEAVYSAEGQAQIKELVAFYLENARIIREELTAAGLDVHGGVNAPYVWVKTPAGLTSWDFFDKLLQVCNVVGTPGSGFGAAGEGYFRISAFNSRENVVTAMQRIRSAGLA</sequence>
<comment type="function">
    <text evidence="1">Involved in the synthesis of meso-diaminopimelate (m-DAP or DL-DAP), required for both lysine and peptidoglycan biosynthesis. Catalyzes the direct conversion of tetrahydrodipicolinate to LL-diaminopimelate.</text>
</comment>
<comment type="catalytic activity">
    <reaction evidence="1">
        <text>(2S,6S)-2,6-diaminopimelate + 2-oxoglutarate = (S)-2,3,4,5-tetrahydrodipicolinate + L-glutamate + H2O + H(+)</text>
        <dbReference type="Rhea" id="RHEA:23988"/>
        <dbReference type="ChEBI" id="CHEBI:15377"/>
        <dbReference type="ChEBI" id="CHEBI:15378"/>
        <dbReference type="ChEBI" id="CHEBI:16810"/>
        <dbReference type="ChEBI" id="CHEBI:16845"/>
        <dbReference type="ChEBI" id="CHEBI:29985"/>
        <dbReference type="ChEBI" id="CHEBI:57609"/>
        <dbReference type="EC" id="2.6.1.83"/>
    </reaction>
</comment>
<comment type="cofactor">
    <cofactor evidence="1">
        <name>pyridoxal 5'-phosphate</name>
        <dbReference type="ChEBI" id="CHEBI:597326"/>
    </cofactor>
</comment>
<comment type="pathway">
    <text evidence="1">Amino-acid biosynthesis; L-lysine biosynthesis via DAP pathway; LL-2,6-diaminopimelate from (S)-tetrahydrodipicolinate (aminotransferase route): step 1/1.</text>
</comment>
<comment type="subunit">
    <text evidence="1">Homodimer.</text>
</comment>
<comment type="similarity">
    <text evidence="1">Belongs to the class-I pyridoxal-phosphate-dependent aminotransferase family. LL-diaminopimelate aminotransferase subfamily.</text>
</comment>
<protein>
    <recommendedName>
        <fullName evidence="1">LL-diaminopimelate aminotransferase</fullName>
        <shortName evidence="1">DAP-AT</shortName>
        <shortName evidence="1">DAP-aminotransferase</shortName>
        <shortName evidence="1">LL-DAP-aminotransferase</shortName>
        <ecNumber evidence="1">2.6.1.83</ecNumber>
    </recommendedName>
</protein>
<organism>
    <name type="scientific">Synechococcus sp. (strain ATCC 27144 / PCC 6301 / SAUG 1402/1)</name>
    <name type="common">Anacystis nidulans</name>
    <dbReference type="NCBI Taxonomy" id="269084"/>
    <lineage>
        <taxon>Bacteria</taxon>
        <taxon>Bacillati</taxon>
        <taxon>Cyanobacteriota</taxon>
        <taxon>Cyanophyceae</taxon>
        <taxon>Synechococcales</taxon>
        <taxon>Synechococcaceae</taxon>
        <taxon>Synechococcus</taxon>
    </lineage>
</organism>
<proteinExistence type="inferred from homology"/>
<feature type="chain" id="PRO_0000312544" description="LL-diaminopimelate aminotransferase">
    <location>
        <begin position="1"/>
        <end position="411"/>
    </location>
</feature>
<feature type="binding site" evidence="1">
    <location>
        <position position="15"/>
    </location>
    <ligand>
        <name>substrate</name>
    </ligand>
</feature>
<feature type="binding site" evidence="1">
    <location>
        <position position="42"/>
    </location>
    <ligand>
        <name>substrate</name>
    </ligand>
</feature>
<feature type="binding site" evidence="1">
    <location>
        <position position="72"/>
    </location>
    <ligand>
        <name>pyridoxal 5'-phosphate</name>
        <dbReference type="ChEBI" id="CHEBI:597326"/>
    </ligand>
</feature>
<feature type="binding site" evidence="1">
    <location>
        <begin position="108"/>
        <end position="109"/>
    </location>
    <ligand>
        <name>pyridoxal 5'-phosphate</name>
        <dbReference type="ChEBI" id="CHEBI:597326"/>
    </ligand>
</feature>
<feature type="binding site" evidence="1">
    <location>
        <position position="109"/>
    </location>
    <ligand>
        <name>substrate</name>
    </ligand>
</feature>
<feature type="binding site" evidence="1">
    <location>
        <position position="132"/>
    </location>
    <ligand>
        <name>pyridoxal 5'-phosphate</name>
        <dbReference type="ChEBI" id="CHEBI:597326"/>
    </ligand>
</feature>
<feature type="binding site" evidence="1">
    <location>
        <position position="132"/>
    </location>
    <ligand>
        <name>substrate</name>
    </ligand>
</feature>
<feature type="binding site" evidence="1">
    <location>
        <position position="187"/>
    </location>
    <ligand>
        <name>pyridoxal 5'-phosphate</name>
        <dbReference type="ChEBI" id="CHEBI:597326"/>
    </ligand>
</feature>
<feature type="binding site" evidence="1">
    <location>
        <position position="187"/>
    </location>
    <ligand>
        <name>substrate</name>
    </ligand>
</feature>
<feature type="binding site" evidence="1">
    <location>
        <position position="218"/>
    </location>
    <ligand>
        <name>pyridoxal 5'-phosphate</name>
        <dbReference type="ChEBI" id="CHEBI:597326"/>
    </ligand>
</feature>
<feature type="binding site" evidence="1">
    <location>
        <begin position="246"/>
        <end position="248"/>
    </location>
    <ligand>
        <name>pyridoxal 5'-phosphate</name>
        <dbReference type="ChEBI" id="CHEBI:597326"/>
    </ligand>
</feature>
<feature type="binding site" evidence="1">
    <location>
        <position position="257"/>
    </location>
    <ligand>
        <name>pyridoxal 5'-phosphate</name>
        <dbReference type="ChEBI" id="CHEBI:597326"/>
    </ligand>
</feature>
<feature type="binding site" evidence="1">
    <location>
        <position position="292"/>
    </location>
    <ligand>
        <name>pyridoxal 5'-phosphate</name>
        <dbReference type="ChEBI" id="CHEBI:597326"/>
    </ligand>
</feature>
<feature type="binding site" evidence="1">
    <location>
        <position position="292"/>
    </location>
    <ligand>
        <name>substrate</name>
    </ligand>
</feature>
<feature type="binding site" evidence="1">
    <location>
        <position position="388"/>
    </location>
    <ligand>
        <name>substrate</name>
    </ligand>
</feature>
<feature type="modified residue" description="N6-(pyridoxal phosphate)lysine" evidence="1">
    <location>
        <position position="249"/>
    </location>
</feature>
<keyword id="KW-0032">Aminotransferase</keyword>
<keyword id="KW-0663">Pyridoxal phosphate</keyword>
<keyword id="KW-0808">Transferase</keyword>
<reference key="1">
    <citation type="journal article" date="2007" name="Photosyn. Res.">
        <title>Complete nucleotide sequence of the freshwater unicellular cyanobacterium Synechococcus elongatus PCC 6301 chromosome: gene content and organization.</title>
        <authorList>
            <person name="Sugita C."/>
            <person name="Ogata K."/>
            <person name="Shikata M."/>
            <person name="Jikuya H."/>
            <person name="Takano J."/>
            <person name="Furumichi M."/>
            <person name="Kanehisa M."/>
            <person name="Omata T."/>
            <person name="Sugiura M."/>
            <person name="Sugita M."/>
        </authorList>
    </citation>
    <scope>NUCLEOTIDE SEQUENCE [LARGE SCALE GENOMIC DNA]</scope>
    <source>
        <strain>ATCC 27144 / PCC 6301 / SAUG 1402/1</strain>
    </source>
</reference>
<accession>Q5N492</accession>
<name>DAPAT_SYNP6</name>
<dbReference type="EC" id="2.6.1.83" evidence="1"/>
<dbReference type="EMBL" id="AP008231">
    <property type="protein sequence ID" value="BAD78877.1"/>
    <property type="molecule type" value="Genomic_DNA"/>
</dbReference>
<dbReference type="RefSeq" id="WP_011242999.1">
    <property type="nucleotide sequence ID" value="NZ_CP085785.1"/>
</dbReference>
<dbReference type="SMR" id="Q5N492"/>
<dbReference type="KEGG" id="syc:syc0687_c"/>
<dbReference type="eggNOG" id="COG0436">
    <property type="taxonomic scope" value="Bacteria"/>
</dbReference>
<dbReference type="UniPathway" id="UPA00034">
    <property type="reaction ID" value="UER00466"/>
</dbReference>
<dbReference type="Proteomes" id="UP000001175">
    <property type="component" value="Chromosome"/>
</dbReference>
<dbReference type="GO" id="GO:0010285">
    <property type="term" value="F:L,L-diaminopimelate aminotransferase activity"/>
    <property type="evidence" value="ECO:0007669"/>
    <property type="project" value="UniProtKB-UniRule"/>
</dbReference>
<dbReference type="GO" id="GO:0030170">
    <property type="term" value="F:pyridoxal phosphate binding"/>
    <property type="evidence" value="ECO:0007669"/>
    <property type="project" value="UniProtKB-UniRule"/>
</dbReference>
<dbReference type="GO" id="GO:0033362">
    <property type="term" value="P:lysine biosynthetic process via diaminopimelate, diaminopimelate-aminotransferase pathway"/>
    <property type="evidence" value="ECO:0007669"/>
    <property type="project" value="UniProtKB-UniRule"/>
</dbReference>
<dbReference type="CDD" id="cd00609">
    <property type="entry name" value="AAT_like"/>
    <property type="match status" value="1"/>
</dbReference>
<dbReference type="FunFam" id="3.40.640.10:FF:000099">
    <property type="entry name" value="LL-diaminopimelate aminotransferase, chloroplastic"/>
    <property type="match status" value="1"/>
</dbReference>
<dbReference type="Gene3D" id="3.90.1150.10">
    <property type="entry name" value="Aspartate Aminotransferase, domain 1"/>
    <property type="match status" value="1"/>
</dbReference>
<dbReference type="Gene3D" id="3.40.640.10">
    <property type="entry name" value="Type I PLP-dependent aspartate aminotransferase-like (Major domain)"/>
    <property type="match status" value="1"/>
</dbReference>
<dbReference type="HAMAP" id="MF_01642">
    <property type="entry name" value="DapL_aminotrans_1"/>
    <property type="match status" value="1"/>
</dbReference>
<dbReference type="InterPro" id="IPR004839">
    <property type="entry name" value="Aminotransferase_I/II_large"/>
</dbReference>
<dbReference type="InterPro" id="IPR019942">
    <property type="entry name" value="DapL/ALD1"/>
</dbReference>
<dbReference type="InterPro" id="IPR015424">
    <property type="entry name" value="PyrdxlP-dep_Trfase"/>
</dbReference>
<dbReference type="InterPro" id="IPR015421">
    <property type="entry name" value="PyrdxlP-dep_Trfase_major"/>
</dbReference>
<dbReference type="InterPro" id="IPR015422">
    <property type="entry name" value="PyrdxlP-dep_Trfase_small"/>
</dbReference>
<dbReference type="NCBIfam" id="TIGR03542">
    <property type="entry name" value="DAPAT_plant"/>
    <property type="match status" value="1"/>
</dbReference>
<dbReference type="PANTHER" id="PTHR43144">
    <property type="entry name" value="AMINOTRANSFERASE"/>
    <property type="match status" value="1"/>
</dbReference>
<dbReference type="Pfam" id="PF00155">
    <property type="entry name" value="Aminotran_1_2"/>
    <property type="match status" value="1"/>
</dbReference>
<dbReference type="SUPFAM" id="SSF53383">
    <property type="entry name" value="PLP-dependent transferases"/>
    <property type="match status" value="1"/>
</dbReference>
<gene>
    <name evidence="1" type="primary">dapL</name>
    <name type="synonym">aspB</name>
    <name type="ordered locus">syc0687_c</name>
</gene>
<evidence type="ECO:0000255" key="1">
    <source>
        <dbReference type="HAMAP-Rule" id="MF_01642"/>
    </source>
</evidence>